<comment type="function">
    <text evidence="3">Photoreceptor required for image-forming vision at low light intensity. Can use both retinal and 3-dehydroretinal as visual pigment. Light-induced isomerization of 11-cis to all-trans retinal triggers a conformational change that activates signaling via G-proteins. Signaling via GNAQ probably mediates the activation of phospholipase C.</text>
</comment>
<comment type="subunit">
    <text evidence="3">Homodimer. Interacts with GNAQ.</text>
</comment>
<comment type="subcellular location">
    <subcellularLocation>
        <location evidence="3">Cell projection</location>
        <location evidence="3">Rhabdomere membrane</location>
        <topology evidence="2">Multi-pass membrane protein</topology>
    </subcellularLocation>
</comment>
<comment type="PTM">
    <text evidence="1">Contains one covalently linked retinal chromophore.</text>
</comment>
<comment type="similarity">
    <text evidence="5">Belongs to the G-protein coupled receptor 1 family. Opsin subfamily.</text>
</comment>
<accession>O18485</accession>
<proteinExistence type="inferred from homology"/>
<reference key="1">
    <citation type="journal article" date="1997" name="Nature">
        <title>Rhodopsin evolution in the dark.</title>
        <authorList>
            <person name="Crandall K.A."/>
            <person name="Hillis D.M."/>
        </authorList>
    </citation>
    <scope>NUCLEOTIDE SEQUENCE [GENOMIC DNA]</scope>
</reference>
<organism>
    <name type="scientific">Procambarus orcinus</name>
    <name type="common">Crayfish</name>
    <dbReference type="NCBI Taxonomy" id="61504"/>
    <lineage>
        <taxon>Eukaryota</taxon>
        <taxon>Metazoa</taxon>
        <taxon>Ecdysozoa</taxon>
        <taxon>Arthropoda</taxon>
        <taxon>Crustacea</taxon>
        <taxon>Multicrustacea</taxon>
        <taxon>Malacostraca</taxon>
        <taxon>Eumalacostraca</taxon>
        <taxon>Eucarida</taxon>
        <taxon>Decapoda</taxon>
        <taxon>Pleocyemata</taxon>
        <taxon>Astacidea</taxon>
        <taxon>Astacoidea</taxon>
        <taxon>Cambaridae</taxon>
        <taxon>Procambarus</taxon>
    </lineage>
</organism>
<dbReference type="EMBL" id="AF005389">
    <property type="protein sequence ID" value="AAB63380.1"/>
    <property type="molecule type" value="Genomic_DNA"/>
</dbReference>
<dbReference type="SMR" id="O18485"/>
<dbReference type="GlyCosmos" id="O18485">
    <property type="glycosylation" value="1 site, No reported glycans"/>
</dbReference>
<dbReference type="GO" id="GO:0042995">
    <property type="term" value="C:cell projection"/>
    <property type="evidence" value="ECO:0007669"/>
    <property type="project" value="UniProtKB-KW"/>
</dbReference>
<dbReference type="GO" id="GO:0005886">
    <property type="term" value="C:plasma membrane"/>
    <property type="evidence" value="ECO:0000250"/>
    <property type="project" value="UniProtKB"/>
</dbReference>
<dbReference type="GO" id="GO:0004930">
    <property type="term" value="F:G protein-coupled receptor activity"/>
    <property type="evidence" value="ECO:0007669"/>
    <property type="project" value="UniProtKB-KW"/>
</dbReference>
<dbReference type="GO" id="GO:0009881">
    <property type="term" value="F:photoreceptor activity"/>
    <property type="evidence" value="ECO:0007669"/>
    <property type="project" value="UniProtKB-KW"/>
</dbReference>
<dbReference type="GO" id="GO:0007602">
    <property type="term" value="P:phototransduction"/>
    <property type="evidence" value="ECO:0007669"/>
    <property type="project" value="UniProtKB-KW"/>
</dbReference>
<dbReference type="GO" id="GO:0007601">
    <property type="term" value="P:visual perception"/>
    <property type="evidence" value="ECO:0007669"/>
    <property type="project" value="UniProtKB-KW"/>
</dbReference>
<dbReference type="CDD" id="cd15079">
    <property type="entry name" value="7tmA_photoreceptors_insect"/>
    <property type="match status" value="1"/>
</dbReference>
<dbReference type="FunFam" id="1.20.1070.10:FF:000044">
    <property type="entry name" value="Opsin, ultraviolet-sensitive"/>
    <property type="match status" value="1"/>
</dbReference>
<dbReference type="Gene3D" id="1.20.1070.10">
    <property type="entry name" value="Rhodopsin 7-helix transmembrane proteins"/>
    <property type="match status" value="1"/>
</dbReference>
<dbReference type="InterPro" id="IPR050125">
    <property type="entry name" value="GPCR_opsins"/>
</dbReference>
<dbReference type="InterPro" id="IPR000276">
    <property type="entry name" value="GPCR_Rhodpsn"/>
</dbReference>
<dbReference type="InterPro" id="IPR017452">
    <property type="entry name" value="GPCR_Rhodpsn_7TM"/>
</dbReference>
<dbReference type="InterPro" id="IPR001760">
    <property type="entry name" value="Opsin"/>
</dbReference>
<dbReference type="InterPro" id="IPR001391">
    <property type="entry name" value="Opsin_lateye"/>
</dbReference>
<dbReference type="InterPro" id="IPR027430">
    <property type="entry name" value="Retinal_BS"/>
</dbReference>
<dbReference type="PANTHER" id="PTHR24240">
    <property type="entry name" value="OPSIN"/>
    <property type="match status" value="1"/>
</dbReference>
<dbReference type="Pfam" id="PF00001">
    <property type="entry name" value="7tm_1"/>
    <property type="match status" value="1"/>
</dbReference>
<dbReference type="PRINTS" id="PR00237">
    <property type="entry name" value="GPCRRHODOPSN"/>
</dbReference>
<dbReference type="PRINTS" id="PR00238">
    <property type="entry name" value="OPSIN"/>
</dbReference>
<dbReference type="PRINTS" id="PR00578">
    <property type="entry name" value="OPSINLTRLEYE"/>
</dbReference>
<dbReference type="SUPFAM" id="SSF81321">
    <property type="entry name" value="Family A G protein-coupled receptor-like"/>
    <property type="match status" value="1"/>
</dbReference>
<dbReference type="PROSITE" id="PS00237">
    <property type="entry name" value="G_PROTEIN_RECEP_F1_1"/>
    <property type="match status" value="1"/>
</dbReference>
<dbReference type="PROSITE" id="PS50262">
    <property type="entry name" value="G_PROTEIN_RECEP_F1_2"/>
    <property type="match status" value="1"/>
</dbReference>
<dbReference type="PROSITE" id="PS00238">
    <property type="entry name" value="OPSIN"/>
    <property type="match status" value="1"/>
</dbReference>
<protein>
    <recommendedName>
        <fullName>Rhodopsin</fullName>
    </recommendedName>
</protein>
<sequence>IHLHWYEYPPMNPMMYPLLLIFMLFTGILCLAGNFVTIWVFMNTKSLRTPANLLVVNLAMSDFLMMFTMFPPMMVTCYYHTWTLGPTFCQVYAFLGNLCGCASIWTMVFITFDRYNVIVKGVAGEPLSTKKASLWILTIWVLSTTWCMAPFFGWNHYVPEGNLTGCGTDYLSEDILSRSYLYVYSTWVYFLPLAITIYCYVFIIKAVAAHEKGMRDQAKKMGIKSLRNEEAQKTSAECRLAKIAMTTVALWFIAWTPYLLINWVGMFARSYLSPVYTIWGYVFAKANAVYNPIVYAIS</sequence>
<name>OPSD_PROOR</name>
<feature type="chain" id="PRO_0000197745" description="Rhodopsin">
    <location>
        <begin position="1" status="less than"/>
        <end position="298" status="greater than"/>
    </location>
</feature>
<feature type="topological domain" description="Extracellular" evidence="6">
    <location>
        <begin position="1" status="less than"/>
        <end position="15"/>
    </location>
</feature>
<feature type="transmembrane region" description="Helical; Name=1" evidence="1">
    <location>
        <begin position="16"/>
        <end position="40"/>
    </location>
</feature>
<feature type="topological domain" description="Cytoplasmic" evidence="6">
    <location>
        <begin position="41"/>
        <end position="52"/>
    </location>
</feature>
<feature type="transmembrane region" description="Helical; Name=2" evidence="1">
    <location>
        <begin position="53"/>
        <end position="75"/>
    </location>
</feature>
<feature type="topological domain" description="Extracellular" evidence="6">
    <location>
        <begin position="76"/>
        <end position="89"/>
    </location>
</feature>
<feature type="transmembrane region" description="Helical; Name=3" evidence="1">
    <location>
        <begin position="90"/>
        <end position="112"/>
    </location>
</feature>
<feature type="topological domain" description="Cytoplasmic" evidence="6">
    <location>
        <begin position="113"/>
        <end position="131"/>
    </location>
</feature>
<feature type="transmembrane region" description="Helical; Name=4" evidence="1">
    <location>
        <begin position="132"/>
        <end position="152"/>
    </location>
</feature>
<feature type="topological domain" description="Extracellular" evidence="6">
    <location>
        <begin position="153"/>
        <end position="179"/>
    </location>
</feature>
<feature type="transmembrane region" description="Helical; Name=5" evidence="1">
    <location>
        <begin position="180"/>
        <end position="201"/>
    </location>
</feature>
<feature type="topological domain" description="Cytoplasmic" evidence="6">
    <location>
        <begin position="202"/>
        <end position="242"/>
    </location>
</feature>
<feature type="transmembrane region" description="Helical; Name=6" evidence="1">
    <location>
        <begin position="243"/>
        <end position="264"/>
    </location>
</feature>
<feature type="topological domain" description="Extracellular" evidence="6">
    <location>
        <begin position="265"/>
        <end position="275"/>
    </location>
</feature>
<feature type="transmembrane region" description="Helical; Name=7" evidence="1">
    <location>
        <begin position="276"/>
        <end position="297"/>
    </location>
</feature>
<feature type="short sequence motif" description="'Ionic lock' involved in activated form stabilization" evidence="1">
    <location>
        <begin position="113"/>
        <end position="115"/>
    </location>
</feature>
<feature type="modified residue" description="N6-(retinylidene)lysine" evidence="1">
    <location>
        <position position="285"/>
    </location>
</feature>
<feature type="glycosylation site" description="N-linked (GlcNAc...) asparagine" evidence="4">
    <location>
        <position position="162"/>
    </location>
</feature>
<feature type="disulfide bond" evidence="5">
    <location>
        <begin position="89"/>
        <end position="166"/>
    </location>
</feature>
<feature type="non-terminal residue">
    <location>
        <position position="1"/>
    </location>
</feature>
<feature type="non-terminal residue">
    <location>
        <position position="298"/>
    </location>
</feature>
<evidence type="ECO:0000250" key="1">
    <source>
        <dbReference type="UniProtKB" id="P02699"/>
    </source>
</evidence>
<evidence type="ECO:0000250" key="2">
    <source>
        <dbReference type="UniProtKB" id="P31356"/>
    </source>
</evidence>
<evidence type="ECO:0000250" key="3">
    <source>
        <dbReference type="UniProtKB" id="P35356"/>
    </source>
</evidence>
<evidence type="ECO:0000255" key="4"/>
<evidence type="ECO:0000255" key="5">
    <source>
        <dbReference type="PROSITE-ProRule" id="PRU00521"/>
    </source>
</evidence>
<evidence type="ECO:0000305" key="6"/>
<keyword id="KW-1003">Cell membrane</keyword>
<keyword id="KW-0966">Cell projection</keyword>
<keyword id="KW-0157">Chromophore</keyword>
<keyword id="KW-1015">Disulfide bond</keyword>
<keyword id="KW-0297">G-protein coupled receptor</keyword>
<keyword id="KW-0325">Glycoprotein</keyword>
<keyword id="KW-0472">Membrane</keyword>
<keyword id="KW-0597">Phosphoprotein</keyword>
<keyword id="KW-0600">Photoreceptor protein</keyword>
<keyword id="KW-0675">Receptor</keyword>
<keyword id="KW-0681">Retinal protein</keyword>
<keyword id="KW-0716">Sensory transduction</keyword>
<keyword id="KW-0807">Transducer</keyword>
<keyword id="KW-0812">Transmembrane</keyword>
<keyword id="KW-1133">Transmembrane helix</keyword>
<keyword id="KW-0844">Vision</keyword>
<gene>
    <name type="primary">RHO</name>
</gene>